<reference key="1">
    <citation type="journal article" date="1998" name="Mol. Biol. Evol.">
        <title>Complete mitochondrial DNA sequence of the fat dormouse, Glis glis: further evidence of rodent paraphyly.</title>
        <authorList>
            <person name="Reyes A."/>
            <person name="Pesole G."/>
            <person name="Saccone C."/>
        </authorList>
    </citation>
    <scope>NUCLEOTIDE SEQUENCE [GENOMIC DNA]</scope>
</reference>
<feature type="chain" id="PRO_0000195553" description="ATP synthase F(0) complex subunit 8">
    <location>
        <begin position="1"/>
        <end position="67"/>
    </location>
</feature>
<feature type="transmembrane region" description="Helical" evidence="4">
    <location>
        <begin position="8"/>
        <end position="24"/>
    </location>
</feature>
<feature type="modified residue" description="N6-acetyllysine; alternate" evidence="2">
    <location>
        <position position="54"/>
    </location>
</feature>
<feature type="modified residue" description="N6-succinyllysine; alternate" evidence="2">
    <location>
        <position position="54"/>
    </location>
</feature>
<feature type="modified residue" description="N6-acetyllysine" evidence="2">
    <location>
        <position position="57"/>
    </location>
</feature>
<dbReference type="EMBL" id="AJ001562">
    <property type="protein sequence ID" value="CAA04834.1"/>
    <property type="molecule type" value="Genomic_DNA"/>
</dbReference>
<dbReference type="PIR" id="T11393">
    <property type="entry name" value="T11393"/>
</dbReference>
<dbReference type="RefSeq" id="NP_007514.1">
    <property type="nucleotide sequence ID" value="NC_001892.1"/>
</dbReference>
<dbReference type="SMR" id="O63902"/>
<dbReference type="GeneID" id="808191"/>
<dbReference type="CTD" id="4509"/>
<dbReference type="GO" id="GO:0031966">
    <property type="term" value="C:mitochondrial membrane"/>
    <property type="evidence" value="ECO:0007669"/>
    <property type="project" value="UniProtKB-SubCell"/>
</dbReference>
<dbReference type="GO" id="GO:0045259">
    <property type="term" value="C:proton-transporting ATP synthase complex"/>
    <property type="evidence" value="ECO:0000250"/>
    <property type="project" value="UniProtKB"/>
</dbReference>
<dbReference type="GO" id="GO:0015078">
    <property type="term" value="F:proton transmembrane transporter activity"/>
    <property type="evidence" value="ECO:0007669"/>
    <property type="project" value="InterPro"/>
</dbReference>
<dbReference type="GO" id="GO:0015986">
    <property type="term" value="P:proton motive force-driven ATP synthesis"/>
    <property type="evidence" value="ECO:0007669"/>
    <property type="project" value="InterPro"/>
</dbReference>
<dbReference type="InterPro" id="IPR039017">
    <property type="entry name" value="ATP8_mammal"/>
</dbReference>
<dbReference type="InterPro" id="IPR001421">
    <property type="entry name" value="ATP8_metazoa"/>
</dbReference>
<dbReference type="PANTHER" id="PTHR13722">
    <property type="entry name" value="ATP SYNTHASE PROTEIN 8"/>
    <property type="match status" value="1"/>
</dbReference>
<dbReference type="PANTHER" id="PTHR13722:SF0">
    <property type="entry name" value="ATP SYNTHASE PROTEIN 8"/>
    <property type="match status" value="1"/>
</dbReference>
<dbReference type="Pfam" id="PF00895">
    <property type="entry name" value="ATP-synt_8"/>
    <property type="match status" value="1"/>
</dbReference>
<geneLocation type="mitochondrion"/>
<organism>
    <name type="scientific">Glis glis</name>
    <name type="common">Fat dormouse</name>
    <name type="synonym">Myoxus glis</name>
    <dbReference type="NCBI Taxonomy" id="41261"/>
    <lineage>
        <taxon>Eukaryota</taxon>
        <taxon>Metazoa</taxon>
        <taxon>Chordata</taxon>
        <taxon>Craniata</taxon>
        <taxon>Vertebrata</taxon>
        <taxon>Euteleostomi</taxon>
        <taxon>Mammalia</taxon>
        <taxon>Eutheria</taxon>
        <taxon>Euarchontoglires</taxon>
        <taxon>Glires</taxon>
        <taxon>Rodentia</taxon>
        <taxon>Sciuromorpha</taxon>
        <taxon>Gliridae</taxon>
        <taxon>Glirinae</taxon>
        <taxon>Glis</taxon>
    </lineage>
</organism>
<accession>O63902</accession>
<proteinExistence type="inferred from homology"/>
<keyword id="KW-0007">Acetylation</keyword>
<keyword id="KW-0066">ATP synthesis</keyword>
<keyword id="KW-0138">CF(0)</keyword>
<keyword id="KW-0375">Hydrogen ion transport</keyword>
<keyword id="KW-0406">Ion transport</keyword>
<keyword id="KW-0472">Membrane</keyword>
<keyword id="KW-0496">Mitochondrion</keyword>
<keyword id="KW-0812">Transmembrane</keyword>
<keyword id="KW-1133">Transmembrane helix</keyword>
<keyword id="KW-0813">Transport</keyword>
<evidence type="ECO:0000250" key="1">
    <source>
        <dbReference type="UniProtKB" id="P03928"/>
    </source>
</evidence>
<evidence type="ECO:0000250" key="2">
    <source>
        <dbReference type="UniProtKB" id="P03930"/>
    </source>
</evidence>
<evidence type="ECO:0000250" key="3">
    <source>
        <dbReference type="UniProtKB" id="P19483"/>
    </source>
</evidence>
<evidence type="ECO:0000255" key="4"/>
<evidence type="ECO:0000305" key="5"/>
<name>ATP8_GLIGL</name>
<comment type="function">
    <text evidence="1 3">Subunit 8, of the mitochondrial membrane ATP synthase complex (F(1)F(0) ATP synthase or Complex V) that produces ATP from ADP in the presence of a proton gradient across the membrane which is generated by electron transport complexes of the respiratory chain. ATP synthase complex consist of a soluble F(1) head domain - the catalytic core - and a membrane F(1) domain - the membrane proton channel. These two domains are linked by a central stalk rotating inside the F(1) region and a stationary peripheral stalk. During catalysis, ATP synthesis in the catalytic domain of F(1) is coupled via a rotary mechanism of the central stalk subunits to proton translocation (By similarity). In vivo, can only synthesize ATP although its ATP hydrolase activity can be activated artificially in vitro (By similarity). Part of the complex F(0) domain (By similarity).</text>
</comment>
<comment type="subunit">
    <text evidence="1">Component of the ATP synthase complex composed at least of ATP5F1A/subunit alpha, ATP5F1B/subunit beta, ATP5MC1/subunit c (homooctomer), MT-ATP6/subunit a, MT-ATP8/subunit 8, ATP5ME/subunit e, ATP5MF/subunit f, ATP5MG/subunit g, ATP5MK/subunit k, ATP5MJ/subunit j, ATP5F1C/subunit gamma, ATP5F1D/subunit delta, ATP5F1E/subunit epsilon, ATP5PF/subunit F6, ATP5PB/subunit b, ATP5PD/subunit d, ATP5PO/subunit OSCP. ATP synthase complex consists of a soluble F(1) head domain (subunits alpha(3) and beta(3)) - the catalytic core - and a membrane F(0) domain - the membrane proton channel (subunits c, a, 8, e, f, g, k and j). These two domains are linked by a central stalk (subunits gamma, delta, and epsilon) rotating inside the F1 region and a stationary peripheral stalk (subunits F6, b, d, and OSCP). Interacts with PRICKLE3.</text>
</comment>
<comment type="subcellular location">
    <subcellularLocation>
        <location>Mitochondrion membrane</location>
        <topology>Single-pass membrane protein</topology>
    </subcellularLocation>
</comment>
<comment type="similarity">
    <text evidence="5">Belongs to the ATPase protein 8 family.</text>
</comment>
<protein>
    <recommendedName>
        <fullName evidence="1">ATP synthase F(0) complex subunit 8</fullName>
    </recommendedName>
    <alternativeName>
        <fullName>A6L</fullName>
    </alternativeName>
    <alternativeName>
        <fullName>F-ATPase subunit 8</fullName>
    </alternativeName>
</protein>
<gene>
    <name evidence="1" type="primary">MT-ATP8</name>
    <name type="synonym">ATP8</name>
    <name type="synonym">ATPASE8</name>
    <name type="synonym">MTATP8</name>
</gene>
<sequence>MPQLDTSTWFTTILSTSFSIIHRLQLKLTTHIFSPNPTPKDLKTLKHHNPWDKKWTKSYLPLSLHQH</sequence>